<organismHost>
    <name type="scientific">Citrullus</name>
    <dbReference type="NCBI Taxonomy" id="3653"/>
</organismHost>
<organismHost>
    <name type="scientific">Cucumis sativus</name>
    <name type="common">Cucumber</name>
    <dbReference type="NCBI Taxonomy" id="3659"/>
</organismHost>
<organismHost>
    <name type="scientific">Lagenaria siceraria</name>
    <name type="common">Bottle gourd</name>
    <name type="synonym">Lagenaria leucantha</name>
    <dbReference type="NCBI Taxonomy" id="3668"/>
</organismHost>
<sequence>ASMLPLDKCFKASFCGDDSLIYLPKGLEYPDIQATANLVWNFEAKLFRKKYGYFCGKYIIHHANGCIVYPDPLKLISKLGNKSLVGYEHVEEFRISLLDVAHSLFNGAYFHLLDDAIHELFPNAGGCSFVINCLCKYLSDKRLFRSLYIDVSK</sequence>
<reference key="1">
    <citation type="journal article" date="1988" name="Virology">
        <title>Interviral homologies of the 30K proteins of tobamoviruses.</title>
        <authorList>
            <person name="Saito T."/>
            <person name="Imai Y."/>
            <person name="Meshi T."/>
            <person name="Okada Y."/>
        </authorList>
    </citation>
    <scope>NUCLEOTIDE SEQUENCE [GENOMIC RNA]</scope>
</reference>
<evidence type="ECO:0000250" key="1"/>
<evidence type="ECO:0000305" key="2"/>
<organism>
    <name type="scientific">Cucumber green mottle mosaic virus (strain watermelon W)</name>
    <name type="common">CGMMV</name>
    <dbReference type="NCBI Taxonomy" id="12237"/>
    <lineage>
        <taxon>Viruses</taxon>
        <taxon>Riboviria</taxon>
        <taxon>Orthornavirae</taxon>
        <taxon>Kitrinoviricota</taxon>
        <taxon>Alsuviricetes</taxon>
        <taxon>Martellivirales</taxon>
        <taxon>Virgaviridae</taxon>
        <taxon>Tobamovirus</taxon>
        <taxon>Cucumber green mottle mosaic virus</taxon>
    </lineage>
</organism>
<keyword id="KW-0548">Nucleotidyltransferase</keyword>
<keyword id="KW-0696">RNA-directed RNA polymerase</keyword>
<keyword id="KW-0808">Transferase</keyword>
<dbReference type="EC" id="2.7.7.48"/>
<dbReference type="EMBL" id="J04322">
    <property type="protein sequence ID" value="AAA46382.1"/>
    <property type="molecule type" value="Genomic_RNA"/>
</dbReference>
<dbReference type="GO" id="GO:0003723">
    <property type="term" value="F:RNA binding"/>
    <property type="evidence" value="ECO:0007669"/>
    <property type="project" value="InterPro"/>
</dbReference>
<dbReference type="GO" id="GO:0003968">
    <property type="term" value="F:RNA-directed RNA polymerase activity"/>
    <property type="evidence" value="ECO:0007669"/>
    <property type="project" value="UniProtKB-KW"/>
</dbReference>
<dbReference type="GO" id="GO:0006351">
    <property type="term" value="P:DNA-templated transcription"/>
    <property type="evidence" value="ECO:0007669"/>
    <property type="project" value="InterPro"/>
</dbReference>
<dbReference type="InterPro" id="IPR043502">
    <property type="entry name" value="DNA/RNA_pol_sf"/>
</dbReference>
<dbReference type="InterPro" id="IPR001788">
    <property type="entry name" value="RNA-dep_RNA_pol_alsuvir"/>
</dbReference>
<dbReference type="Pfam" id="PF00978">
    <property type="entry name" value="RdRP_2"/>
    <property type="match status" value="1"/>
</dbReference>
<dbReference type="SUPFAM" id="SSF56672">
    <property type="entry name" value="DNA/RNA polymerases"/>
    <property type="match status" value="1"/>
</dbReference>
<comment type="function">
    <text evidence="1">The replicase large subunit is an RNA-dependent RNA polymerase active in viral RNA replication.</text>
</comment>
<comment type="catalytic activity">
    <reaction>
        <text>RNA(n) + a ribonucleoside 5'-triphosphate = RNA(n+1) + diphosphate</text>
        <dbReference type="Rhea" id="RHEA:21248"/>
        <dbReference type="Rhea" id="RHEA-COMP:14527"/>
        <dbReference type="Rhea" id="RHEA-COMP:17342"/>
        <dbReference type="ChEBI" id="CHEBI:33019"/>
        <dbReference type="ChEBI" id="CHEBI:61557"/>
        <dbReference type="ChEBI" id="CHEBI:140395"/>
        <dbReference type="EC" id="2.7.7.48"/>
    </reaction>
</comment>
<comment type="similarity">
    <text evidence="2">Belongs to the tobamovirus RNA-directed RNA polymerase family.</text>
</comment>
<accession>P69515</accession>
<accession>P19523</accession>
<accession>P89877</accession>
<accession>P90356</accession>
<accession>Q83208</accession>
<name>RDRP_CGMVW</name>
<protein>
    <recommendedName>
        <fullName>Replicase large subunit</fullName>
        <ecNumber>2.7.7.48</ecNumber>
    </recommendedName>
    <alternativeName>
        <fullName>183 kDa protein</fullName>
    </alternativeName>
</protein>
<proteinExistence type="inferred from homology"/>
<feature type="chain" id="PRO_0000144975" description="Replicase large subunit">
    <location>
        <begin position="1" status="less than"/>
        <end position="153"/>
    </location>
</feature>
<feature type="non-terminal residue">
    <location>
        <position position="1"/>
    </location>
</feature>